<feature type="chain" id="PRO_1000198229" description="UPF0297 protein BCG9842_B0729">
    <location>
        <begin position="1"/>
        <end position="88"/>
    </location>
</feature>
<accession>B7IYP1</accession>
<comment type="similarity">
    <text evidence="1">Belongs to the UPF0297 family.</text>
</comment>
<reference key="1">
    <citation type="submission" date="2008-10" db="EMBL/GenBank/DDBJ databases">
        <title>Genome sequence of Bacillus cereus G9842.</title>
        <authorList>
            <person name="Dodson R.J."/>
            <person name="Durkin A.S."/>
            <person name="Rosovitz M.J."/>
            <person name="Rasko D.A."/>
            <person name="Hoffmaster A."/>
            <person name="Ravel J."/>
            <person name="Sutton G."/>
        </authorList>
    </citation>
    <scope>NUCLEOTIDE SEQUENCE [LARGE SCALE GENOMIC DNA]</scope>
    <source>
        <strain>G9842</strain>
    </source>
</reference>
<organism>
    <name type="scientific">Bacillus cereus (strain G9842)</name>
    <dbReference type="NCBI Taxonomy" id="405531"/>
    <lineage>
        <taxon>Bacteria</taxon>
        <taxon>Bacillati</taxon>
        <taxon>Bacillota</taxon>
        <taxon>Bacilli</taxon>
        <taxon>Bacillales</taxon>
        <taxon>Bacillaceae</taxon>
        <taxon>Bacillus</taxon>
        <taxon>Bacillus cereus group</taxon>
    </lineage>
</organism>
<evidence type="ECO:0000255" key="1">
    <source>
        <dbReference type="HAMAP-Rule" id="MF_01507"/>
    </source>
</evidence>
<dbReference type="EMBL" id="CP001186">
    <property type="protein sequence ID" value="ACK94597.1"/>
    <property type="molecule type" value="Genomic_DNA"/>
</dbReference>
<dbReference type="RefSeq" id="WP_000348591.1">
    <property type="nucleotide sequence ID" value="NC_011772.1"/>
</dbReference>
<dbReference type="SMR" id="B7IYP1"/>
<dbReference type="KEGG" id="bcg:BCG9842_B0729"/>
<dbReference type="HOGENOM" id="CLU_162466_0_0_9"/>
<dbReference type="Proteomes" id="UP000006744">
    <property type="component" value="Chromosome"/>
</dbReference>
<dbReference type="HAMAP" id="MF_01507">
    <property type="entry name" value="UPF0297"/>
    <property type="match status" value="1"/>
</dbReference>
<dbReference type="InterPro" id="IPR009309">
    <property type="entry name" value="IreB"/>
</dbReference>
<dbReference type="NCBIfam" id="NF003997">
    <property type="entry name" value="PRK05473.1"/>
    <property type="match status" value="1"/>
</dbReference>
<dbReference type="PANTHER" id="PTHR40067">
    <property type="entry name" value="UPF0297 PROTEIN YRZL"/>
    <property type="match status" value="1"/>
</dbReference>
<dbReference type="PANTHER" id="PTHR40067:SF1">
    <property type="entry name" value="UPF0297 PROTEIN YRZL"/>
    <property type="match status" value="1"/>
</dbReference>
<dbReference type="Pfam" id="PF06135">
    <property type="entry name" value="IreB"/>
    <property type="match status" value="1"/>
</dbReference>
<dbReference type="PIRSF" id="PIRSF037258">
    <property type="entry name" value="DUF965_bac"/>
    <property type="match status" value="1"/>
</dbReference>
<name>Y729_BACC2</name>
<gene>
    <name type="ordered locus">BCG9842_B0729</name>
</gene>
<sequence length="88" mass="10316">MDGFDKTMKFSIQDEKQSVHVNDVLLTVYDALQEKGYNPINQIVGYLLSGDPAYIPRHKDARSIVRKLERDEIIEELVKSYLKHHREE</sequence>
<protein>
    <recommendedName>
        <fullName evidence="1">UPF0297 protein BCG9842_B0729</fullName>
    </recommendedName>
</protein>
<proteinExistence type="inferred from homology"/>